<gene>
    <name evidence="1" type="primary">cbpM</name>
    <name type="ordered locus">CbuG_0885</name>
</gene>
<organism>
    <name type="scientific">Coxiella burnetii (strain CbuG_Q212)</name>
    <name type="common">Coxiella burnetii (strain Q212)</name>
    <dbReference type="NCBI Taxonomy" id="434923"/>
    <lineage>
        <taxon>Bacteria</taxon>
        <taxon>Pseudomonadati</taxon>
        <taxon>Pseudomonadota</taxon>
        <taxon>Gammaproteobacteria</taxon>
        <taxon>Legionellales</taxon>
        <taxon>Coxiellaceae</taxon>
        <taxon>Coxiella</taxon>
    </lineage>
</organism>
<comment type="function">
    <text evidence="1">Interacts with CbpA and inhibits both the DnaJ-like co-chaperone activity and the DNA binding activity of CbpA. Together with CbpA, modulates the activity of the DnaK chaperone system. Does not inhibit the co-chaperone activity of DnaJ.</text>
</comment>
<comment type="similarity">
    <text evidence="1">Belongs to the CbpM family.</text>
</comment>
<name>CBPM_COXB2</name>
<accession>B6IZY6</accession>
<evidence type="ECO:0000255" key="1">
    <source>
        <dbReference type="HAMAP-Rule" id="MF_01155"/>
    </source>
</evidence>
<proteinExistence type="inferred from homology"/>
<protein>
    <recommendedName>
        <fullName evidence="1">Chaperone modulatory protein CbpM</fullName>
    </recommendedName>
</protein>
<reference key="1">
    <citation type="journal article" date="2009" name="Infect. Immun.">
        <title>Comparative genomics reveal extensive transposon-mediated genomic plasticity and diversity among potential effector proteins within the genus Coxiella.</title>
        <authorList>
            <person name="Beare P.A."/>
            <person name="Unsworth N."/>
            <person name="Andoh M."/>
            <person name="Voth D.E."/>
            <person name="Omsland A."/>
            <person name="Gilk S.D."/>
            <person name="Williams K.P."/>
            <person name="Sobral B.W."/>
            <person name="Kupko J.J. III"/>
            <person name="Porcella S.F."/>
            <person name="Samuel J.E."/>
            <person name="Heinzen R.A."/>
        </authorList>
    </citation>
    <scope>NUCLEOTIDE SEQUENCE [LARGE SCALE GENOMIC DNA]</scope>
    <source>
        <strain>CbuG_Q212</strain>
    </source>
</reference>
<feature type="chain" id="PRO_1000137765" description="Chaperone modulatory protein CbpM">
    <location>
        <begin position="1"/>
        <end position="106"/>
    </location>
</feature>
<dbReference type="EMBL" id="CP001019">
    <property type="protein sequence ID" value="ACJ18264.1"/>
    <property type="molecule type" value="Genomic_DNA"/>
</dbReference>
<dbReference type="RefSeq" id="WP_005768409.1">
    <property type="nucleotide sequence ID" value="NC_011527.1"/>
</dbReference>
<dbReference type="SMR" id="B6IZY6"/>
<dbReference type="KEGG" id="cbg:CbuG_0885"/>
<dbReference type="HOGENOM" id="CLU_144710_3_0_6"/>
<dbReference type="Gene3D" id="1.10.1660.10">
    <property type="match status" value="1"/>
</dbReference>
<dbReference type="HAMAP" id="MF_01155">
    <property type="entry name" value="CbpM"/>
    <property type="match status" value="1"/>
</dbReference>
<dbReference type="InterPro" id="IPR022835">
    <property type="entry name" value="CbpM"/>
</dbReference>
<dbReference type="Pfam" id="PF13591">
    <property type="entry name" value="MerR_2"/>
    <property type="match status" value="1"/>
</dbReference>
<sequence>MTKQIIKGIIIERSSPLKIDELSQAVHLRREIIIEMVEHRLIEPEGSSPTSWKFDNVCLKRAKIAASFYRDLEINMPGIAIALDLLDKIEHLEQRLRTLERFENQE</sequence>